<organism>
    <name type="scientific">Rattus norvegicus</name>
    <name type="common">Rat</name>
    <dbReference type="NCBI Taxonomy" id="10116"/>
    <lineage>
        <taxon>Eukaryota</taxon>
        <taxon>Metazoa</taxon>
        <taxon>Chordata</taxon>
        <taxon>Craniata</taxon>
        <taxon>Vertebrata</taxon>
        <taxon>Euteleostomi</taxon>
        <taxon>Mammalia</taxon>
        <taxon>Eutheria</taxon>
        <taxon>Euarchontoglires</taxon>
        <taxon>Glires</taxon>
        <taxon>Rodentia</taxon>
        <taxon>Myomorpha</taxon>
        <taxon>Muroidea</taxon>
        <taxon>Muridae</taxon>
        <taxon>Murinae</taxon>
        <taxon>Rattus</taxon>
    </lineage>
</organism>
<sequence>MFQAAGAAQATPSHEAKGSSGNSTVQRSKSFSLRAQVKETCAACQKTVYPMERLVADKLIFHNSCFCCKHCHTKLSLGSYAAMHGEFYCKPHFQQLFKSKGNYDEGFGRKQHKELWAHKEVDSGTKTA</sequence>
<proteinExistence type="evidence at transcript level"/>
<evidence type="ECO:0000250" key="1">
    <source>
        <dbReference type="UniProtKB" id="Q9BT23"/>
    </source>
</evidence>
<evidence type="ECO:0000255" key="2">
    <source>
        <dbReference type="PROSITE-ProRule" id="PRU00125"/>
    </source>
</evidence>
<evidence type="ECO:0000256" key="3">
    <source>
        <dbReference type="SAM" id="MobiDB-lite"/>
    </source>
</evidence>
<evidence type="ECO:0000305" key="4"/>
<feature type="chain" id="PRO_0000251209" description="LIM domain-containing protein 2">
    <location>
        <begin position="1"/>
        <end position="128"/>
    </location>
</feature>
<feature type="domain" description="LIM zinc-binding" evidence="2">
    <location>
        <begin position="39"/>
        <end position="99"/>
    </location>
</feature>
<feature type="region of interest" description="Disordered" evidence="3">
    <location>
        <begin position="1"/>
        <end position="25"/>
    </location>
</feature>
<feature type="binding site" evidence="1">
    <location>
        <position position="41"/>
    </location>
    <ligand>
        <name>Zn(2+)</name>
        <dbReference type="ChEBI" id="CHEBI:29105"/>
        <label>1</label>
    </ligand>
</feature>
<feature type="binding site" evidence="1">
    <location>
        <position position="44"/>
    </location>
    <ligand>
        <name>Zn(2+)</name>
        <dbReference type="ChEBI" id="CHEBI:29105"/>
        <label>1</label>
    </ligand>
</feature>
<feature type="binding site" evidence="1">
    <location>
        <position position="62"/>
    </location>
    <ligand>
        <name>Zn(2+)</name>
        <dbReference type="ChEBI" id="CHEBI:29105"/>
        <label>1</label>
    </ligand>
</feature>
<feature type="binding site" evidence="1">
    <location>
        <position position="65"/>
    </location>
    <ligand>
        <name>Zn(2+)</name>
        <dbReference type="ChEBI" id="CHEBI:29105"/>
        <label>1</label>
    </ligand>
</feature>
<feature type="binding site" evidence="1">
    <location>
        <position position="68"/>
    </location>
    <ligand>
        <name>Zn(2+)</name>
        <dbReference type="ChEBI" id="CHEBI:29105"/>
        <label>2</label>
    </ligand>
</feature>
<feature type="binding site" evidence="1">
    <location>
        <position position="71"/>
    </location>
    <ligand>
        <name>Zn(2+)</name>
        <dbReference type="ChEBI" id="CHEBI:29105"/>
        <label>2</label>
    </ligand>
</feature>
<feature type="binding site" evidence="1">
    <location>
        <position position="89"/>
    </location>
    <ligand>
        <name>Zn(2+)</name>
        <dbReference type="ChEBI" id="CHEBI:29105"/>
        <label>2</label>
    </ligand>
</feature>
<feature type="binding site" evidence="1">
    <location>
        <position position="92"/>
    </location>
    <ligand>
        <name>Zn(2+)</name>
        <dbReference type="ChEBI" id="CHEBI:29105"/>
        <label>2</label>
    </ligand>
</feature>
<feature type="modified residue" description="N-acetylmethionine" evidence="1">
    <location>
        <position position="1"/>
    </location>
</feature>
<name>LIMD2_RAT</name>
<keyword id="KW-0007">Acetylation</keyword>
<keyword id="KW-0963">Cytoplasm</keyword>
<keyword id="KW-0440">LIM domain</keyword>
<keyword id="KW-0479">Metal-binding</keyword>
<keyword id="KW-0539">Nucleus</keyword>
<keyword id="KW-1185">Reference proteome</keyword>
<keyword id="KW-0862">Zinc</keyword>
<protein>
    <recommendedName>
        <fullName evidence="4">LIM domain-containing protein 2</fullName>
    </recommendedName>
</protein>
<gene>
    <name type="primary">Limd2</name>
</gene>
<accession>Q4KM31</accession>
<dbReference type="EMBL" id="BC098855">
    <property type="protein sequence ID" value="AAH98855.1"/>
    <property type="molecule type" value="mRNA"/>
</dbReference>
<dbReference type="RefSeq" id="NP_001020886.1">
    <property type="nucleotide sequence ID" value="NM_001025715.1"/>
</dbReference>
<dbReference type="RefSeq" id="XP_006247683.1">
    <property type="nucleotide sequence ID" value="XM_006247621.5"/>
</dbReference>
<dbReference type="RefSeq" id="XP_006247684.1">
    <property type="nucleotide sequence ID" value="XM_006247622.5"/>
</dbReference>
<dbReference type="RefSeq" id="XP_063125532.1">
    <property type="nucleotide sequence ID" value="XM_063269462.1"/>
</dbReference>
<dbReference type="BMRB" id="Q4KM31"/>
<dbReference type="SMR" id="Q4KM31"/>
<dbReference type="FunCoup" id="Q4KM31">
    <property type="interactions" value="424"/>
</dbReference>
<dbReference type="STRING" id="10116.ENSRNOP00000033334"/>
<dbReference type="GlyGen" id="Q4KM31">
    <property type="glycosylation" value="1 site"/>
</dbReference>
<dbReference type="iPTMnet" id="Q4KM31"/>
<dbReference type="PhosphoSitePlus" id="Q4KM31"/>
<dbReference type="PaxDb" id="10116-ENSRNOP00000033334"/>
<dbReference type="GeneID" id="360646"/>
<dbReference type="KEGG" id="rno:360646"/>
<dbReference type="UCSC" id="RGD:1309967">
    <property type="organism name" value="rat"/>
</dbReference>
<dbReference type="AGR" id="RGD:1309967"/>
<dbReference type="CTD" id="80774"/>
<dbReference type="RGD" id="1309967">
    <property type="gene designation" value="Limd2"/>
</dbReference>
<dbReference type="VEuPathDB" id="HostDB:ENSRNOG00000025448"/>
<dbReference type="eggNOG" id="KOG1700">
    <property type="taxonomic scope" value="Eukaryota"/>
</dbReference>
<dbReference type="HOGENOM" id="CLU_026811_3_0_1"/>
<dbReference type="InParanoid" id="Q4KM31"/>
<dbReference type="OrthoDB" id="6573at9989"/>
<dbReference type="PhylomeDB" id="Q4KM31"/>
<dbReference type="PRO" id="PR:Q4KM31"/>
<dbReference type="Proteomes" id="UP000002494">
    <property type="component" value="Chromosome 10"/>
</dbReference>
<dbReference type="Bgee" id="ENSRNOG00000025448">
    <property type="expression patterns" value="Expressed in thymus and 19 other cell types or tissues"/>
</dbReference>
<dbReference type="GO" id="GO:0015629">
    <property type="term" value="C:actin cytoskeleton"/>
    <property type="evidence" value="ECO:0000318"/>
    <property type="project" value="GO_Central"/>
</dbReference>
<dbReference type="GO" id="GO:0005737">
    <property type="term" value="C:cytoplasm"/>
    <property type="evidence" value="ECO:0007669"/>
    <property type="project" value="UniProtKB-SubCell"/>
</dbReference>
<dbReference type="GO" id="GO:0005634">
    <property type="term" value="C:nucleus"/>
    <property type="evidence" value="ECO:0007669"/>
    <property type="project" value="UniProtKB-SubCell"/>
</dbReference>
<dbReference type="GO" id="GO:0005886">
    <property type="term" value="C:plasma membrane"/>
    <property type="evidence" value="ECO:0000318"/>
    <property type="project" value="GO_Central"/>
</dbReference>
<dbReference type="GO" id="GO:0051015">
    <property type="term" value="F:actin filament binding"/>
    <property type="evidence" value="ECO:0000318"/>
    <property type="project" value="GO_Central"/>
</dbReference>
<dbReference type="GO" id="GO:0046872">
    <property type="term" value="F:metal ion binding"/>
    <property type="evidence" value="ECO:0007669"/>
    <property type="project" value="UniProtKB-KW"/>
</dbReference>
<dbReference type="GO" id="GO:0051017">
    <property type="term" value="P:actin filament bundle assembly"/>
    <property type="evidence" value="ECO:0000318"/>
    <property type="project" value="GO_Central"/>
</dbReference>
<dbReference type="CDD" id="cd09486">
    <property type="entry name" value="LIM_Eplin_like_1"/>
    <property type="match status" value="1"/>
</dbReference>
<dbReference type="FunFam" id="2.10.110.10:FF:000002">
    <property type="entry name" value="LIM domain and actin-binding 1"/>
    <property type="match status" value="1"/>
</dbReference>
<dbReference type="Gene3D" id="2.10.110.10">
    <property type="entry name" value="Cysteine Rich Protein"/>
    <property type="match status" value="1"/>
</dbReference>
<dbReference type="InterPro" id="IPR044115">
    <property type="entry name" value="LIM_LIMD2"/>
</dbReference>
<dbReference type="InterPro" id="IPR001781">
    <property type="entry name" value="Znf_LIM"/>
</dbReference>
<dbReference type="PANTHER" id="PTHR24206">
    <property type="entry name" value="OS06G0237300 PROTEIN"/>
    <property type="match status" value="1"/>
</dbReference>
<dbReference type="Pfam" id="PF00412">
    <property type="entry name" value="LIM"/>
    <property type="match status" value="1"/>
</dbReference>
<dbReference type="SMART" id="SM00132">
    <property type="entry name" value="LIM"/>
    <property type="match status" value="1"/>
</dbReference>
<dbReference type="SUPFAM" id="SSF57716">
    <property type="entry name" value="Glucocorticoid receptor-like (DNA-binding domain)"/>
    <property type="match status" value="2"/>
</dbReference>
<dbReference type="PROSITE" id="PS00478">
    <property type="entry name" value="LIM_DOMAIN_1"/>
    <property type="match status" value="1"/>
</dbReference>
<dbReference type="PROSITE" id="PS50023">
    <property type="entry name" value="LIM_DOMAIN_2"/>
    <property type="match status" value="1"/>
</dbReference>
<comment type="function">
    <text evidence="1">Acts as an activator of the protein-kinase ILK, thereby regulating cell motility.</text>
</comment>
<comment type="subunit">
    <text evidence="1">Interacts with ILK.</text>
</comment>
<comment type="subcellular location">
    <subcellularLocation>
        <location evidence="1">Cytoplasm</location>
    </subcellularLocation>
    <subcellularLocation>
        <location evidence="1">Nucleus</location>
    </subcellularLocation>
    <text evidence="1">Mainly found in cytoplasm, concentrated in membrane ruffles and in streaks reminiscent of focal adhesion plaques. Also found in nucleus.</text>
</comment>
<reference key="1">
    <citation type="journal article" date="2004" name="Genome Res.">
        <title>The status, quality, and expansion of the NIH full-length cDNA project: the Mammalian Gene Collection (MGC).</title>
        <authorList>
            <consortium name="The MGC Project Team"/>
        </authorList>
    </citation>
    <scope>NUCLEOTIDE SEQUENCE [LARGE SCALE MRNA]</scope>
    <source>
        <tissue>Thymus</tissue>
    </source>
</reference>